<organism>
    <name type="scientific">Saccharomyces cerevisiae (strain JAY291)</name>
    <name type="common">Baker's yeast</name>
    <dbReference type="NCBI Taxonomy" id="574961"/>
    <lineage>
        <taxon>Eukaryota</taxon>
        <taxon>Fungi</taxon>
        <taxon>Dikarya</taxon>
        <taxon>Ascomycota</taxon>
        <taxon>Saccharomycotina</taxon>
        <taxon>Saccharomycetes</taxon>
        <taxon>Saccharomycetales</taxon>
        <taxon>Saccharomycetaceae</taxon>
        <taxon>Saccharomyces</taxon>
    </lineage>
</organism>
<protein>
    <recommendedName>
        <fullName>ATP-dependent kinase YFH7</fullName>
        <ecNumber>2.7.1.-</ecNumber>
    </recommendedName>
    <alternativeName>
        <fullName>Altered inheritance of mitochondria protein 12</fullName>
    </alternativeName>
</protein>
<dbReference type="EC" id="2.7.1.-"/>
<dbReference type="EMBL" id="ACFL01000451">
    <property type="protein sequence ID" value="EEU04208.1"/>
    <property type="molecule type" value="Genomic_DNA"/>
</dbReference>
<dbReference type="SMR" id="C7GYB3"/>
<dbReference type="OrthoDB" id="9941at4893"/>
<dbReference type="Proteomes" id="UP000008073">
    <property type="component" value="Unassembled WGS sequence"/>
</dbReference>
<dbReference type="GO" id="GO:0005524">
    <property type="term" value="F:ATP binding"/>
    <property type="evidence" value="ECO:0007669"/>
    <property type="project" value="UniProtKB-KW"/>
</dbReference>
<dbReference type="GO" id="GO:0016301">
    <property type="term" value="F:kinase activity"/>
    <property type="evidence" value="ECO:0007669"/>
    <property type="project" value="UniProtKB-KW"/>
</dbReference>
<dbReference type="CDD" id="cd00009">
    <property type="entry name" value="AAA"/>
    <property type="match status" value="1"/>
</dbReference>
<dbReference type="FunFam" id="3.40.50.300:FF:002630">
    <property type="entry name" value="ATP-dependent kinase YFH7"/>
    <property type="match status" value="1"/>
</dbReference>
<dbReference type="Gene3D" id="3.40.50.300">
    <property type="entry name" value="P-loop containing nucleotide triphosphate hydrolases"/>
    <property type="match status" value="1"/>
</dbReference>
<dbReference type="InterPro" id="IPR027417">
    <property type="entry name" value="P-loop_NTPase"/>
</dbReference>
<dbReference type="PANTHER" id="PTHR10285">
    <property type="entry name" value="URIDINE KINASE"/>
    <property type="match status" value="1"/>
</dbReference>
<dbReference type="SUPFAM" id="SSF52540">
    <property type="entry name" value="P-loop containing nucleoside triphosphate hydrolases"/>
    <property type="match status" value="2"/>
</dbReference>
<proteinExistence type="inferred from homology"/>
<comment type="function">
    <text evidence="1">ATP-dependent kinase that could be involved in endoplasmic reticulum membrane assembly.</text>
</comment>
<comment type="similarity">
    <text evidence="2">Belongs to the YFH7 family.</text>
</comment>
<gene>
    <name type="primary">YFH7</name>
    <name type="synonym">AIM12</name>
    <name type="ORF">C1Q_05534</name>
</gene>
<feature type="chain" id="PRO_0000404217" description="ATP-dependent kinase YFH7">
    <location>
        <begin position="1"/>
        <end position="353"/>
    </location>
</feature>
<feature type="binding site" evidence="1">
    <location>
        <begin position="31"/>
        <end position="39"/>
    </location>
    <ligand>
        <name>ATP</name>
        <dbReference type="ChEBI" id="CHEBI:30616"/>
    </ligand>
</feature>
<accession>C7GYB3</accession>
<keyword id="KW-0067">ATP-binding</keyword>
<keyword id="KW-0418">Kinase</keyword>
<keyword id="KW-0547">Nucleotide-binding</keyword>
<keyword id="KW-0808">Transferase</keyword>
<name>YFH7_YEAS2</name>
<sequence>MVDTHKLADDVLQLLDNRIEDNYRVCVILVGSPGSGKSTIAEELCQIINEKYHTFLSEHPNVIEVNDRLKPMVNLVDSLKTLQPNEVAEMIENQGLFKDHVEDVNFQPIKYSALTSNNEECTAVVARGGTANAIRIATVDNPVNVNKLAQDSINIAQIVPMDGFHLSRRCLDLFKDPQTAHKRRGSPSTFDSNNFLQLCKILAKTSLCKVSSHHKFYSTSSVFEKLSKTFSQKIPDIFVPGFNHALKDPTPDQYCISKFTRIVILEGLYLLYDQENWKKIYKTLADTGALLVYKIDIDYEATEERVAKRHLQSGLVTTIAEGREKFRSNDLLNGRDIDNHLIKVDNIVHIRND</sequence>
<evidence type="ECO:0000250" key="1"/>
<evidence type="ECO:0000305" key="2"/>
<reference key="1">
    <citation type="journal article" date="2009" name="Genome Res.">
        <title>Genome structure of a Saccharomyces cerevisiae strain widely used in bioethanol production.</title>
        <authorList>
            <person name="Argueso J.L."/>
            <person name="Carazzolle M.F."/>
            <person name="Mieczkowski P.A."/>
            <person name="Duarte F.M."/>
            <person name="Netto O.V.C."/>
            <person name="Missawa S.K."/>
            <person name="Galzerani F."/>
            <person name="Costa G.G.L."/>
            <person name="Vidal R.O."/>
            <person name="Noronha M.F."/>
            <person name="Dominska M."/>
            <person name="Andrietta M.G.S."/>
            <person name="Andrietta S.R."/>
            <person name="Cunha A.F."/>
            <person name="Gomes L.H."/>
            <person name="Tavares F.C.A."/>
            <person name="Alcarde A.R."/>
            <person name="Dietrich F.S."/>
            <person name="McCusker J.H."/>
            <person name="Petes T.D."/>
            <person name="Pereira G.A.G."/>
        </authorList>
    </citation>
    <scope>NUCLEOTIDE SEQUENCE [LARGE SCALE GENOMIC DNA]</scope>
    <source>
        <strain>JAY291</strain>
    </source>
</reference>